<comment type="catalytic activity">
    <reaction evidence="1">
        <text>2-(N(omega)-L-arginino)succinate = fumarate + L-arginine</text>
        <dbReference type="Rhea" id="RHEA:24020"/>
        <dbReference type="ChEBI" id="CHEBI:29806"/>
        <dbReference type="ChEBI" id="CHEBI:32682"/>
        <dbReference type="ChEBI" id="CHEBI:57472"/>
        <dbReference type="EC" id="4.3.2.1"/>
    </reaction>
</comment>
<comment type="pathway">
    <text evidence="1">Amino-acid biosynthesis; L-arginine biosynthesis; L-arginine from L-ornithine and carbamoyl phosphate: step 3/3.</text>
</comment>
<comment type="subcellular location">
    <subcellularLocation>
        <location evidence="1">Cytoplasm</location>
    </subcellularLocation>
</comment>
<comment type="similarity">
    <text evidence="1">Belongs to the lyase 1 family. Argininosuccinate lyase subfamily.</text>
</comment>
<protein>
    <recommendedName>
        <fullName evidence="1">Argininosuccinate lyase</fullName>
        <shortName evidence="1">ASAL</shortName>
        <ecNumber evidence="1">4.3.2.1</ecNumber>
    </recommendedName>
    <alternativeName>
        <fullName evidence="1">Arginosuccinase</fullName>
    </alternativeName>
</protein>
<feature type="chain" id="PRO_0000321441" description="Argininosuccinate lyase">
    <location>
        <begin position="1"/>
        <end position="472"/>
    </location>
</feature>
<evidence type="ECO:0000255" key="1">
    <source>
        <dbReference type="HAMAP-Rule" id="MF_00006"/>
    </source>
</evidence>
<name>ARLY_MARMM</name>
<dbReference type="EC" id="4.3.2.1" evidence="1"/>
<dbReference type="EMBL" id="CP000449">
    <property type="protein sequence ID" value="ABI66663.1"/>
    <property type="molecule type" value="Genomic_DNA"/>
</dbReference>
<dbReference type="RefSeq" id="WP_011644308.1">
    <property type="nucleotide sequence ID" value="NC_008347.1"/>
</dbReference>
<dbReference type="SMR" id="Q0AM30"/>
<dbReference type="STRING" id="394221.Mmar10_2371"/>
<dbReference type="KEGG" id="mmr:Mmar10_2371"/>
<dbReference type="eggNOG" id="COG0165">
    <property type="taxonomic scope" value="Bacteria"/>
</dbReference>
<dbReference type="HOGENOM" id="CLU_027272_2_3_5"/>
<dbReference type="OrthoDB" id="9769623at2"/>
<dbReference type="UniPathway" id="UPA00068">
    <property type="reaction ID" value="UER00114"/>
</dbReference>
<dbReference type="Proteomes" id="UP000001964">
    <property type="component" value="Chromosome"/>
</dbReference>
<dbReference type="GO" id="GO:0005829">
    <property type="term" value="C:cytosol"/>
    <property type="evidence" value="ECO:0007669"/>
    <property type="project" value="TreeGrafter"/>
</dbReference>
<dbReference type="GO" id="GO:0004056">
    <property type="term" value="F:argininosuccinate lyase activity"/>
    <property type="evidence" value="ECO:0007669"/>
    <property type="project" value="UniProtKB-UniRule"/>
</dbReference>
<dbReference type="GO" id="GO:0042450">
    <property type="term" value="P:arginine biosynthetic process via ornithine"/>
    <property type="evidence" value="ECO:0007669"/>
    <property type="project" value="InterPro"/>
</dbReference>
<dbReference type="GO" id="GO:0006526">
    <property type="term" value="P:L-arginine biosynthetic process"/>
    <property type="evidence" value="ECO:0007669"/>
    <property type="project" value="UniProtKB-UniRule"/>
</dbReference>
<dbReference type="CDD" id="cd01359">
    <property type="entry name" value="Argininosuccinate_lyase"/>
    <property type="match status" value="1"/>
</dbReference>
<dbReference type="FunFam" id="1.10.275.10:FF:000002">
    <property type="entry name" value="Argininosuccinate lyase"/>
    <property type="match status" value="1"/>
</dbReference>
<dbReference type="FunFam" id="1.10.40.30:FF:000001">
    <property type="entry name" value="Argininosuccinate lyase"/>
    <property type="match status" value="1"/>
</dbReference>
<dbReference type="FunFam" id="1.20.200.10:FF:000015">
    <property type="entry name" value="argininosuccinate lyase isoform X2"/>
    <property type="match status" value="1"/>
</dbReference>
<dbReference type="Gene3D" id="1.10.40.30">
    <property type="entry name" value="Fumarase/aspartase (C-terminal domain)"/>
    <property type="match status" value="1"/>
</dbReference>
<dbReference type="Gene3D" id="1.20.200.10">
    <property type="entry name" value="Fumarase/aspartase (Central domain)"/>
    <property type="match status" value="1"/>
</dbReference>
<dbReference type="Gene3D" id="1.10.275.10">
    <property type="entry name" value="Fumarase/aspartase (N-terminal domain)"/>
    <property type="match status" value="1"/>
</dbReference>
<dbReference type="HAMAP" id="MF_00006">
    <property type="entry name" value="Arg_succ_lyase"/>
    <property type="match status" value="1"/>
</dbReference>
<dbReference type="InterPro" id="IPR029419">
    <property type="entry name" value="Arg_succ_lyase_C"/>
</dbReference>
<dbReference type="InterPro" id="IPR009049">
    <property type="entry name" value="Argininosuccinate_lyase"/>
</dbReference>
<dbReference type="InterPro" id="IPR024083">
    <property type="entry name" value="Fumarase/histidase_N"/>
</dbReference>
<dbReference type="InterPro" id="IPR020557">
    <property type="entry name" value="Fumarate_lyase_CS"/>
</dbReference>
<dbReference type="InterPro" id="IPR000362">
    <property type="entry name" value="Fumarate_lyase_fam"/>
</dbReference>
<dbReference type="InterPro" id="IPR022761">
    <property type="entry name" value="Fumarate_lyase_N"/>
</dbReference>
<dbReference type="InterPro" id="IPR008948">
    <property type="entry name" value="L-Aspartase-like"/>
</dbReference>
<dbReference type="NCBIfam" id="TIGR00838">
    <property type="entry name" value="argH"/>
    <property type="match status" value="1"/>
</dbReference>
<dbReference type="PANTHER" id="PTHR43814">
    <property type="entry name" value="ARGININOSUCCINATE LYASE"/>
    <property type="match status" value="1"/>
</dbReference>
<dbReference type="PANTHER" id="PTHR43814:SF1">
    <property type="entry name" value="ARGININOSUCCINATE LYASE"/>
    <property type="match status" value="1"/>
</dbReference>
<dbReference type="Pfam" id="PF14698">
    <property type="entry name" value="ASL_C2"/>
    <property type="match status" value="1"/>
</dbReference>
<dbReference type="Pfam" id="PF00206">
    <property type="entry name" value="Lyase_1"/>
    <property type="match status" value="1"/>
</dbReference>
<dbReference type="PRINTS" id="PR00145">
    <property type="entry name" value="ARGSUCLYASE"/>
</dbReference>
<dbReference type="PRINTS" id="PR00149">
    <property type="entry name" value="FUMRATELYASE"/>
</dbReference>
<dbReference type="SUPFAM" id="SSF48557">
    <property type="entry name" value="L-aspartase-like"/>
    <property type="match status" value="1"/>
</dbReference>
<dbReference type="PROSITE" id="PS00163">
    <property type="entry name" value="FUMARATE_LYASES"/>
    <property type="match status" value="1"/>
</dbReference>
<accession>Q0AM30</accession>
<proteinExistence type="inferred from homology"/>
<gene>
    <name evidence="1" type="primary">argH</name>
    <name type="ordered locus">Mmar10_2371</name>
</gene>
<sequence>MADDTSNDAGQKASSAMWGGRFSAGPSAVMEAINASIDIDQRMADQDIDGSLAHSRMLAATGVISSADAAAIQRGLEQVRSEIHAGDFPWSKALEDVHMNVEARLKEIIGEPAGRLHTARSRNDQVATDFRLWLRDACDRIDAMLAAYQTALVKQAETHADQVMPGFTHLQTAQPVSLGHHLLSYVEVAQRDRGRFADARKRLNESPLGCAALAGTAFPIDREMTASDLGFDRPMANSLDGVAARDFALEVLSAASICAVNLSRFAEEIVLWCTRRFGFATLSDAWSTGSSIMPQKRNPDAAELVRAKPGRIIGSLTGLLTVVKGLPLAYSKDLQEDKAPVFQAIDDLELALLSMAGMAGDLSFFPEALEEAAGEAYSDATDLADYVVRELGKPFRDAHHISGSIVKLAEARGVPLAELSLAEMQSVEPAIDETVFSVLSARASMMSRTSFGGTSPIRVREQVAIWKDRLGC</sequence>
<organism>
    <name type="scientific">Maricaulis maris (strain MCS10)</name>
    <name type="common">Caulobacter maris</name>
    <dbReference type="NCBI Taxonomy" id="394221"/>
    <lineage>
        <taxon>Bacteria</taxon>
        <taxon>Pseudomonadati</taxon>
        <taxon>Pseudomonadota</taxon>
        <taxon>Alphaproteobacteria</taxon>
        <taxon>Maricaulales</taxon>
        <taxon>Maricaulaceae</taxon>
        <taxon>Maricaulis</taxon>
    </lineage>
</organism>
<reference key="1">
    <citation type="submission" date="2006-08" db="EMBL/GenBank/DDBJ databases">
        <title>Complete sequence of Maricaulis maris MCS10.</title>
        <authorList>
            <consortium name="US DOE Joint Genome Institute"/>
            <person name="Copeland A."/>
            <person name="Lucas S."/>
            <person name="Lapidus A."/>
            <person name="Barry K."/>
            <person name="Detter J.C."/>
            <person name="Glavina del Rio T."/>
            <person name="Hammon N."/>
            <person name="Israni S."/>
            <person name="Dalin E."/>
            <person name="Tice H."/>
            <person name="Pitluck S."/>
            <person name="Saunders E."/>
            <person name="Brettin T."/>
            <person name="Bruce D."/>
            <person name="Han C."/>
            <person name="Tapia R."/>
            <person name="Gilna P."/>
            <person name="Schmutz J."/>
            <person name="Larimer F."/>
            <person name="Land M."/>
            <person name="Hauser L."/>
            <person name="Kyrpides N."/>
            <person name="Mikhailova N."/>
            <person name="Viollier P."/>
            <person name="Stephens C."/>
            <person name="Richardson P."/>
        </authorList>
    </citation>
    <scope>NUCLEOTIDE SEQUENCE [LARGE SCALE GENOMIC DNA]</scope>
    <source>
        <strain>MCS10</strain>
    </source>
</reference>
<keyword id="KW-0028">Amino-acid biosynthesis</keyword>
<keyword id="KW-0055">Arginine biosynthesis</keyword>
<keyword id="KW-0963">Cytoplasm</keyword>
<keyword id="KW-0456">Lyase</keyword>
<keyword id="KW-1185">Reference proteome</keyword>